<feature type="chain" id="PRO_0000128075" description="Uncharacterized protein AF_1944">
    <location>
        <begin position="1"/>
        <end position="345"/>
    </location>
</feature>
<reference key="1">
    <citation type="journal article" date="1997" name="Nature">
        <title>The complete genome sequence of the hyperthermophilic, sulphate-reducing archaeon Archaeoglobus fulgidus.</title>
        <authorList>
            <person name="Klenk H.-P."/>
            <person name="Clayton R.A."/>
            <person name="Tomb J.-F."/>
            <person name="White O."/>
            <person name="Nelson K.E."/>
            <person name="Ketchum K.A."/>
            <person name="Dodson R.J."/>
            <person name="Gwinn M.L."/>
            <person name="Hickey E.K."/>
            <person name="Peterson J.D."/>
            <person name="Richardson D.L."/>
            <person name="Kerlavage A.R."/>
            <person name="Graham D.E."/>
            <person name="Kyrpides N.C."/>
            <person name="Fleischmann R.D."/>
            <person name="Quackenbush J."/>
            <person name="Lee N.H."/>
            <person name="Sutton G.G."/>
            <person name="Gill S.R."/>
            <person name="Kirkness E.F."/>
            <person name="Dougherty B.A."/>
            <person name="McKenney K."/>
            <person name="Adams M.D."/>
            <person name="Loftus B.J."/>
            <person name="Peterson S.N."/>
            <person name="Reich C.I."/>
            <person name="McNeil L.K."/>
            <person name="Badger J.H."/>
            <person name="Glodek A."/>
            <person name="Zhou L."/>
            <person name="Overbeek R."/>
            <person name="Gocayne J.D."/>
            <person name="Weidman J.F."/>
            <person name="McDonald L.A."/>
            <person name="Utterback T.R."/>
            <person name="Cotton M.D."/>
            <person name="Spriggs T."/>
            <person name="Artiach P."/>
            <person name="Kaine B.P."/>
            <person name="Sykes S.M."/>
            <person name="Sadow P.W."/>
            <person name="D'Andrea K.P."/>
            <person name="Bowman C."/>
            <person name="Fujii C."/>
            <person name="Garland S.A."/>
            <person name="Mason T.M."/>
            <person name="Olsen G.J."/>
            <person name="Fraser C.M."/>
            <person name="Smith H.O."/>
            <person name="Woese C.R."/>
            <person name="Venter J.C."/>
        </authorList>
    </citation>
    <scope>NUCLEOTIDE SEQUENCE [LARGE SCALE GENOMIC DNA]</scope>
    <source>
        <strain>ATCC 49558 / DSM 4304 / JCM 9628 / NBRC 100126 / VC-16</strain>
    </source>
</reference>
<name>Y1944_ARCFU</name>
<protein>
    <recommendedName>
        <fullName>Uncharacterized protein AF_1944</fullName>
    </recommendedName>
</protein>
<dbReference type="EMBL" id="AE000782">
    <property type="protein sequence ID" value="AAB89314.1"/>
    <property type="molecule type" value="Genomic_DNA"/>
</dbReference>
<dbReference type="PIR" id="G69492">
    <property type="entry name" value="G69492"/>
</dbReference>
<dbReference type="RefSeq" id="WP_010879436.1">
    <property type="nucleotide sequence ID" value="NC_000917.1"/>
</dbReference>
<dbReference type="STRING" id="224325.AF_1944"/>
<dbReference type="PaxDb" id="224325-AF_1944"/>
<dbReference type="EnsemblBacteria" id="AAB89314">
    <property type="protein sequence ID" value="AAB89314"/>
    <property type="gene ID" value="AF_1944"/>
</dbReference>
<dbReference type="GeneID" id="1485165"/>
<dbReference type="KEGG" id="afu:AF_1944"/>
<dbReference type="HOGENOM" id="CLU_803154_0_0_2"/>
<dbReference type="Proteomes" id="UP000002199">
    <property type="component" value="Chromosome"/>
</dbReference>
<sequence>MKLTKIRTEGDFNWGPFLTDSDGYFTIPIPDSQAGKKFRIRIEPWDINYAARIARDLDRCNEYVWFLSDEITVPDHGRLDLGELRIGKDANYDFTAYWQEKRHTCLFGLCACGGSVHVIQGGSVYLNIADALLAARAYADLHRSDDDGIGRVDVQYPDSDWSNYDQTWDEITLTTNHGFLDGVAIHEYGHFLEDHISEEDIYVGNTSHTFCDDKDDTEFAWSEGFAEYYGTFIVAINDHLSHPDISFGTIENPGCSKFDDDIEATVAAVLWDMVDNSSFPDYNASESFDTVGGLDDVIFKMFDSELDHWHDAPDLCEMHGNLDHRLDSTTLNKVERIFEHYNACR</sequence>
<proteinExistence type="predicted"/>
<organism>
    <name type="scientific">Archaeoglobus fulgidus (strain ATCC 49558 / DSM 4304 / JCM 9628 / NBRC 100126 / VC-16)</name>
    <dbReference type="NCBI Taxonomy" id="224325"/>
    <lineage>
        <taxon>Archaea</taxon>
        <taxon>Methanobacteriati</taxon>
        <taxon>Methanobacteriota</taxon>
        <taxon>Archaeoglobi</taxon>
        <taxon>Archaeoglobales</taxon>
        <taxon>Archaeoglobaceae</taxon>
        <taxon>Archaeoglobus</taxon>
    </lineage>
</organism>
<accession>O28335</accession>
<gene>
    <name type="ordered locus">AF_1944</name>
</gene>
<keyword id="KW-1185">Reference proteome</keyword>